<name>MNMG_CLOAB</name>
<protein>
    <recommendedName>
        <fullName evidence="1">tRNA uridine 5-carboxymethylaminomethyl modification enzyme MnmG</fullName>
    </recommendedName>
    <alternativeName>
        <fullName evidence="1">Glucose-inhibited division protein A</fullName>
    </alternativeName>
</protein>
<reference key="1">
    <citation type="journal article" date="2001" name="J. Bacteriol.">
        <title>Genome sequence and comparative analysis of the solvent-producing bacterium Clostridium acetobutylicum.</title>
        <authorList>
            <person name="Noelling J."/>
            <person name="Breton G."/>
            <person name="Omelchenko M.V."/>
            <person name="Makarova K.S."/>
            <person name="Zeng Q."/>
            <person name="Gibson R."/>
            <person name="Lee H.M."/>
            <person name="Dubois J."/>
            <person name="Qiu D."/>
            <person name="Hitti J."/>
            <person name="Wolf Y.I."/>
            <person name="Tatusov R.L."/>
            <person name="Sabathe F."/>
            <person name="Doucette-Stamm L.A."/>
            <person name="Soucaille P."/>
            <person name="Daly M.J."/>
            <person name="Bennett G.N."/>
            <person name="Koonin E.V."/>
            <person name="Smith D.R."/>
        </authorList>
    </citation>
    <scope>NUCLEOTIDE SEQUENCE [LARGE SCALE GENOMIC DNA]</scope>
    <source>
        <strain>ATCC 824 / DSM 792 / JCM 1419 / IAM 19013 / LMG 5710 / NBRC 13948 / NRRL B-527 / VKM B-1787 / 2291 / W</strain>
    </source>
</reference>
<dbReference type="EMBL" id="AE001437">
    <property type="protein sequence ID" value="AAK81653.1"/>
    <property type="molecule type" value="Genomic_DNA"/>
</dbReference>
<dbReference type="PIR" id="B97358">
    <property type="entry name" value="B97358"/>
</dbReference>
<dbReference type="RefSeq" id="NP_350313.1">
    <property type="nucleotide sequence ID" value="NC_003030.1"/>
</dbReference>
<dbReference type="RefSeq" id="WP_010966993.1">
    <property type="nucleotide sequence ID" value="NC_003030.1"/>
</dbReference>
<dbReference type="SMR" id="Q97CW3"/>
<dbReference type="STRING" id="272562.CA_C3733"/>
<dbReference type="GeneID" id="45000229"/>
<dbReference type="KEGG" id="cac:CA_C3733"/>
<dbReference type="PATRIC" id="fig|272562.8.peg.3923"/>
<dbReference type="eggNOG" id="COG0445">
    <property type="taxonomic scope" value="Bacteria"/>
</dbReference>
<dbReference type="HOGENOM" id="CLU_007831_2_2_9"/>
<dbReference type="OrthoDB" id="9815560at2"/>
<dbReference type="Proteomes" id="UP000000814">
    <property type="component" value="Chromosome"/>
</dbReference>
<dbReference type="GO" id="GO:0005829">
    <property type="term" value="C:cytosol"/>
    <property type="evidence" value="ECO:0007669"/>
    <property type="project" value="TreeGrafter"/>
</dbReference>
<dbReference type="GO" id="GO:0050660">
    <property type="term" value="F:flavin adenine dinucleotide binding"/>
    <property type="evidence" value="ECO:0007669"/>
    <property type="project" value="UniProtKB-UniRule"/>
</dbReference>
<dbReference type="GO" id="GO:0030488">
    <property type="term" value="P:tRNA methylation"/>
    <property type="evidence" value="ECO:0007669"/>
    <property type="project" value="TreeGrafter"/>
</dbReference>
<dbReference type="GO" id="GO:0002098">
    <property type="term" value="P:tRNA wobble uridine modification"/>
    <property type="evidence" value="ECO:0007669"/>
    <property type="project" value="InterPro"/>
</dbReference>
<dbReference type="FunFam" id="1.10.10.1800:FF:000001">
    <property type="entry name" value="tRNA uridine 5-carboxymethylaminomethyl modification enzyme MnmG"/>
    <property type="match status" value="1"/>
</dbReference>
<dbReference type="FunFam" id="1.10.150.570:FF:000001">
    <property type="entry name" value="tRNA uridine 5-carboxymethylaminomethyl modification enzyme MnmG"/>
    <property type="match status" value="1"/>
</dbReference>
<dbReference type="FunFam" id="3.50.50.60:FF:000002">
    <property type="entry name" value="tRNA uridine 5-carboxymethylaminomethyl modification enzyme MnmG"/>
    <property type="match status" value="1"/>
</dbReference>
<dbReference type="Gene3D" id="3.50.50.60">
    <property type="entry name" value="FAD/NAD(P)-binding domain"/>
    <property type="match status" value="2"/>
</dbReference>
<dbReference type="Gene3D" id="1.10.150.570">
    <property type="entry name" value="GidA associated domain, C-terminal subdomain"/>
    <property type="match status" value="1"/>
</dbReference>
<dbReference type="Gene3D" id="1.10.10.1800">
    <property type="entry name" value="tRNA uridine 5-carboxymethylaminomethyl modification enzyme MnmG/GidA"/>
    <property type="match status" value="1"/>
</dbReference>
<dbReference type="HAMAP" id="MF_00129">
    <property type="entry name" value="MnmG_GidA"/>
    <property type="match status" value="1"/>
</dbReference>
<dbReference type="InterPro" id="IPR036188">
    <property type="entry name" value="FAD/NAD-bd_sf"/>
</dbReference>
<dbReference type="InterPro" id="IPR049312">
    <property type="entry name" value="GIDA_C_N"/>
</dbReference>
<dbReference type="InterPro" id="IPR004416">
    <property type="entry name" value="MnmG"/>
</dbReference>
<dbReference type="InterPro" id="IPR002218">
    <property type="entry name" value="MnmG-rel"/>
</dbReference>
<dbReference type="InterPro" id="IPR020595">
    <property type="entry name" value="MnmG-rel_CS"/>
</dbReference>
<dbReference type="InterPro" id="IPR026904">
    <property type="entry name" value="MnmG_C"/>
</dbReference>
<dbReference type="InterPro" id="IPR047001">
    <property type="entry name" value="MnmG_C_subdom"/>
</dbReference>
<dbReference type="InterPro" id="IPR044920">
    <property type="entry name" value="MnmG_C_subdom_sf"/>
</dbReference>
<dbReference type="InterPro" id="IPR040131">
    <property type="entry name" value="MnmG_N"/>
</dbReference>
<dbReference type="NCBIfam" id="TIGR00136">
    <property type="entry name" value="mnmG_gidA"/>
    <property type="match status" value="1"/>
</dbReference>
<dbReference type="PANTHER" id="PTHR11806">
    <property type="entry name" value="GLUCOSE INHIBITED DIVISION PROTEIN A"/>
    <property type="match status" value="1"/>
</dbReference>
<dbReference type="PANTHER" id="PTHR11806:SF0">
    <property type="entry name" value="PROTEIN MTO1 HOMOLOG, MITOCHONDRIAL"/>
    <property type="match status" value="1"/>
</dbReference>
<dbReference type="Pfam" id="PF01134">
    <property type="entry name" value="GIDA"/>
    <property type="match status" value="1"/>
</dbReference>
<dbReference type="Pfam" id="PF21680">
    <property type="entry name" value="GIDA_C_1st"/>
    <property type="match status" value="1"/>
</dbReference>
<dbReference type="Pfam" id="PF13932">
    <property type="entry name" value="SAM_GIDA_C"/>
    <property type="match status" value="1"/>
</dbReference>
<dbReference type="PRINTS" id="PR00368">
    <property type="entry name" value="FADPNR"/>
</dbReference>
<dbReference type="PRINTS" id="PR00411">
    <property type="entry name" value="PNDRDTASEI"/>
</dbReference>
<dbReference type="SMART" id="SM01228">
    <property type="entry name" value="GIDA_assoc_3"/>
    <property type="match status" value="1"/>
</dbReference>
<dbReference type="SUPFAM" id="SSF51905">
    <property type="entry name" value="FAD/NAD(P)-binding domain"/>
    <property type="match status" value="1"/>
</dbReference>
<dbReference type="PROSITE" id="PS01280">
    <property type="entry name" value="GIDA_1"/>
    <property type="match status" value="1"/>
</dbReference>
<dbReference type="PROSITE" id="PS01281">
    <property type="entry name" value="GIDA_2"/>
    <property type="match status" value="1"/>
</dbReference>
<comment type="function">
    <text evidence="1">NAD-binding protein involved in the addition of a carboxymethylaminomethyl (cmnm) group at the wobble position (U34) of certain tRNAs, forming tRNA-cmnm(5)s(2)U34.</text>
</comment>
<comment type="cofactor">
    <cofactor evidence="1">
        <name>FAD</name>
        <dbReference type="ChEBI" id="CHEBI:57692"/>
    </cofactor>
</comment>
<comment type="subunit">
    <text evidence="1">Homodimer. Heterotetramer of two MnmE and two MnmG subunits.</text>
</comment>
<comment type="subcellular location">
    <subcellularLocation>
        <location evidence="1">Cytoplasm</location>
    </subcellularLocation>
</comment>
<comment type="similarity">
    <text evidence="1">Belongs to the MnmG family.</text>
</comment>
<accession>Q97CW3</accession>
<keyword id="KW-0963">Cytoplasm</keyword>
<keyword id="KW-0274">FAD</keyword>
<keyword id="KW-0285">Flavoprotein</keyword>
<keyword id="KW-0520">NAD</keyword>
<keyword id="KW-1185">Reference proteome</keyword>
<keyword id="KW-0819">tRNA processing</keyword>
<proteinExistence type="inferred from homology"/>
<gene>
    <name evidence="1" type="primary">mnmG</name>
    <name evidence="1" type="synonym">gidA</name>
    <name type="ordered locus">CA_C3733</name>
</gene>
<organism>
    <name type="scientific">Clostridium acetobutylicum (strain ATCC 824 / DSM 792 / JCM 1419 / IAM 19013 / LMG 5710 / NBRC 13948 / NRRL B-527 / VKM B-1787 / 2291 / W)</name>
    <dbReference type="NCBI Taxonomy" id="272562"/>
    <lineage>
        <taxon>Bacteria</taxon>
        <taxon>Bacillati</taxon>
        <taxon>Bacillota</taxon>
        <taxon>Clostridia</taxon>
        <taxon>Eubacteriales</taxon>
        <taxon>Clostridiaceae</taxon>
        <taxon>Clostridium</taxon>
    </lineage>
</organism>
<feature type="chain" id="PRO_0000117087" description="tRNA uridine 5-carboxymethylaminomethyl modification enzyme MnmG">
    <location>
        <begin position="1"/>
        <end position="626"/>
    </location>
</feature>
<feature type="binding site" evidence="1">
    <location>
        <begin position="15"/>
        <end position="20"/>
    </location>
    <ligand>
        <name>FAD</name>
        <dbReference type="ChEBI" id="CHEBI:57692"/>
    </ligand>
</feature>
<feature type="binding site" evidence="1">
    <location>
        <begin position="274"/>
        <end position="288"/>
    </location>
    <ligand>
        <name>NAD(+)</name>
        <dbReference type="ChEBI" id="CHEBI:57540"/>
    </ligand>
</feature>
<sequence length="626" mass="70332">MIKYFSGDYDVIVIGGGHAGCEAALAASRMGCRTLMCTMNLDSIAMMPCNPNIGGTAKGHLVKEIDALGGEMGVNIDKTFIQSRMLNISKGPAVHSLRAQADKVRYSEVMRNVLENQEDLYLRQIEVISLDIEDGKVKGIVTKNGACFTANTIVLATGTYLRSRIIIGEVNYSGGPSGLFPANELSQSLIDVGIKLRRFKTGTPARINKRSVDFSKMVEQPGDERIIPFSFLNDKLEKEQISCYLTYTNEKTHEVIKENIDRSPLYNGTIKSVGPRYCPSIEDKVMRFPDKQQHQIFIEPEGENTNDLYVGGMSSSLPEEVQIKMLKTVPGLEDVEILKTAYAIEYDCIDPTQLKLSLEFKDVKGLFGAGQFNGSSGYEEAASQGIIAGINAALMVKNKEPLILGRSDGYIGVLIDDLVTKGTNEPYRMMTSRAEYRLLLRQDNADLRLTELGHKIGLVDENRYEKFIGRKNAIEEELNRLKKVQITNKKEVNDFLEGLGSVSLKKPISLYELIRRPELDYDKLQTLDIDRKDLAQDIIDEVNIMIKYEGYIEKQLEQVDQFKKFEKRVIPEDIDYNSIKNLRTEAIQKLSKLRPVNLGQASRISGVSPSDISVLMIYLDYYFKNK</sequence>
<evidence type="ECO:0000255" key="1">
    <source>
        <dbReference type="HAMAP-Rule" id="MF_00129"/>
    </source>
</evidence>